<sequence length="147" mass="17118">MKYTKKEKEELKKVLTEEEYYVTQENGTERPFTNEYWDFNGEGIYVDITTGEPLFTSKDKFHSSCGWPAFSKPIDRSIIKEKVDKSHGMIRTEVRSKLGDSHLGHVFCDGPEELGGLRYCINSASLKFIPKEELKEKGYEEYLELFK</sequence>
<comment type="catalytic activity">
    <reaction evidence="1">
        <text>L-methionyl-[protein] + [thioredoxin]-disulfide + H2O = L-methionyl-(R)-S-oxide-[protein] + [thioredoxin]-dithiol</text>
        <dbReference type="Rhea" id="RHEA:24164"/>
        <dbReference type="Rhea" id="RHEA-COMP:10698"/>
        <dbReference type="Rhea" id="RHEA-COMP:10700"/>
        <dbReference type="Rhea" id="RHEA-COMP:12313"/>
        <dbReference type="Rhea" id="RHEA-COMP:12314"/>
        <dbReference type="ChEBI" id="CHEBI:15377"/>
        <dbReference type="ChEBI" id="CHEBI:16044"/>
        <dbReference type="ChEBI" id="CHEBI:29950"/>
        <dbReference type="ChEBI" id="CHEBI:45764"/>
        <dbReference type="ChEBI" id="CHEBI:50058"/>
        <dbReference type="EC" id="1.8.4.12"/>
    </reaction>
</comment>
<comment type="similarity">
    <text evidence="1">Belongs to the MsrB Met sulfoxide reductase family.</text>
</comment>
<feature type="chain" id="PRO_0000140269" description="Peptide methionine sulfoxide reductase MsrB">
    <location>
        <begin position="1"/>
        <end position="147"/>
    </location>
</feature>
<feature type="domain" description="MsrB" evidence="2">
    <location>
        <begin position="8"/>
        <end position="131"/>
    </location>
</feature>
<feature type="active site" description="Nucleophile" evidence="2">
    <location>
        <position position="120"/>
    </location>
</feature>
<reference key="1">
    <citation type="journal article" date="2002" name="Proc. Natl. Acad. Sci. U.S.A.">
        <title>Complete genome sequence of Clostridium perfringens, an anaerobic flesh-eater.</title>
        <authorList>
            <person name="Shimizu T."/>
            <person name="Ohtani K."/>
            <person name="Hirakawa H."/>
            <person name="Ohshima K."/>
            <person name="Yamashita A."/>
            <person name="Shiba T."/>
            <person name="Ogasawara N."/>
            <person name="Hattori M."/>
            <person name="Kuhara S."/>
            <person name="Hayashi H."/>
        </authorList>
    </citation>
    <scope>NUCLEOTIDE SEQUENCE [LARGE SCALE GENOMIC DNA]</scope>
    <source>
        <strain>13 / Type A</strain>
    </source>
</reference>
<evidence type="ECO:0000255" key="1">
    <source>
        <dbReference type="HAMAP-Rule" id="MF_01400"/>
    </source>
</evidence>
<evidence type="ECO:0000255" key="2">
    <source>
        <dbReference type="PROSITE-ProRule" id="PRU01126"/>
    </source>
</evidence>
<protein>
    <recommendedName>
        <fullName evidence="1">Peptide methionine sulfoxide reductase MsrB</fullName>
        <ecNumber evidence="1">1.8.4.12</ecNumber>
    </recommendedName>
    <alternativeName>
        <fullName evidence="1">Peptide-methionine (R)-S-oxide reductase</fullName>
    </alternativeName>
</protein>
<keyword id="KW-0560">Oxidoreductase</keyword>
<keyword id="KW-1185">Reference proteome</keyword>
<proteinExistence type="inferred from homology"/>
<organism>
    <name type="scientific">Clostridium perfringens (strain 13 / Type A)</name>
    <dbReference type="NCBI Taxonomy" id="195102"/>
    <lineage>
        <taxon>Bacteria</taxon>
        <taxon>Bacillati</taxon>
        <taxon>Bacillota</taxon>
        <taxon>Clostridia</taxon>
        <taxon>Eubacteriales</taxon>
        <taxon>Clostridiaceae</taxon>
        <taxon>Clostridium</taxon>
    </lineage>
</organism>
<dbReference type="EC" id="1.8.4.12" evidence="1"/>
<dbReference type="EMBL" id="BA000016">
    <property type="protein sequence ID" value="BAB81313.1"/>
    <property type="molecule type" value="Genomic_DNA"/>
</dbReference>
<dbReference type="RefSeq" id="WP_003468018.1">
    <property type="nucleotide sequence ID" value="NC_003366.1"/>
</dbReference>
<dbReference type="SMR" id="Q8XJZ6"/>
<dbReference type="STRING" id="195102.gene:10490871"/>
<dbReference type="KEGG" id="cpe:CPE1607"/>
<dbReference type="HOGENOM" id="CLU_031040_8_5_9"/>
<dbReference type="Proteomes" id="UP000000818">
    <property type="component" value="Chromosome"/>
</dbReference>
<dbReference type="GO" id="GO:0005737">
    <property type="term" value="C:cytoplasm"/>
    <property type="evidence" value="ECO:0007669"/>
    <property type="project" value="TreeGrafter"/>
</dbReference>
<dbReference type="GO" id="GO:0033743">
    <property type="term" value="F:peptide-methionine (R)-S-oxide reductase activity"/>
    <property type="evidence" value="ECO:0007669"/>
    <property type="project" value="UniProtKB-UniRule"/>
</dbReference>
<dbReference type="GO" id="GO:0030091">
    <property type="term" value="P:protein repair"/>
    <property type="evidence" value="ECO:0007669"/>
    <property type="project" value="InterPro"/>
</dbReference>
<dbReference type="GO" id="GO:0006979">
    <property type="term" value="P:response to oxidative stress"/>
    <property type="evidence" value="ECO:0007669"/>
    <property type="project" value="InterPro"/>
</dbReference>
<dbReference type="FunFam" id="2.170.150.20:FF:000003">
    <property type="entry name" value="Peptide methionine sulfoxide reductase MsrB"/>
    <property type="match status" value="1"/>
</dbReference>
<dbReference type="Gene3D" id="2.170.150.20">
    <property type="entry name" value="Peptide methionine sulfoxide reductase"/>
    <property type="match status" value="1"/>
</dbReference>
<dbReference type="HAMAP" id="MF_01400">
    <property type="entry name" value="MsrB"/>
    <property type="match status" value="1"/>
</dbReference>
<dbReference type="InterPro" id="IPR028427">
    <property type="entry name" value="Met_Sox_Rdtase_MsrB"/>
</dbReference>
<dbReference type="InterPro" id="IPR002579">
    <property type="entry name" value="Met_Sox_Rdtase_MsrB_dom"/>
</dbReference>
<dbReference type="InterPro" id="IPR011057">
    <property type="entry name" value="Mss4-like_sf"/>
</dbReference>
<dbReference type="NCBIfam" id="TIGR00357">
    <property type="entry name" value="peptide-methionine (R)-S-oxide reductase MsrB"/>
    <property type="match status" value="1"/>
</dbReference>
<dbReference type="PANTHER" id="PTHR10173">
    <property type="entry name" value="METHIONINE SULFOXIDE REDUCTASE"/>
    <property type="match status" value="1"/>
</dbReference>
<dbReference type="PANTHER" id="PTHR10173:SF59">
    <property type="entry name" value="PEPTIDE METHIONINE SULFOXIDE REDUCTASE MSRA_MSRB"/>
    <property type="match status" value="1"/>
</dbReference>
<dbReference type="Pfam" id="PF01641">
    <property type="entry name" value="SelR"/>
    <property type="match status" value="1"/>
</dbReference>
<dbReference type="SUPFAM" id="SSF51316">
    <property type="entry name" value="Mss4-like"/>
    <property type="match status" value="1"/>
</dbReference>
<dbReference type="PROSITE" id="PS51790">
    <property type="entry name" value="MSRB"/>
    <property type="match status" value="1"/>
</dbReference>
<name>MSRB_CLOPE</name>
<gene>
    <name evidence="1" type="primary">msrB</name>
    <name type="ordered locus">CPE1607</name>
</gene>
<accession>Q8XJZ6</accession>